<feature type="signal peptide">
    <location>
        <begin position="1"/>
        <end position="23"/>
    </location>
</feature>
<feature type="chain" id="PRO_0000016406" description="Interferon omega-1">
    <location>
        <begin position="24"/>
        <end position="195"/>
    </location>
</feature>
<feature type="glycosylation site" description="N-linked (GlcNAc...) asparagine" evidence="2">
    <location>
        <position position="101"/>
    </location>
</feature>
<feature type="disulfide bond" evidence="1">
    <location>
        <begin position="24"/>
        <end position="122"/>
    </location>
</feature>
<feature type="disulfide bond" evidence="1">
    <location>
        <begin position="52"/>
        <end position="162"/>
    </location>
</feature>
<proteinExistence type="inferred from homology"/>
<dbReference type="EMBL" id="M14544">
    <property type="protein sequence ID" value="AAA30955.1"/>
    <property type="molecule type" value="Genomic_DNA"/>
</dbReference>
<dbReference type="PIR" id="E24912">
    <property type="entry name" value="IVHO21"/>
</dbReference>
<dbReference type="RefSeq" id="NP_001077064.1">
    <property type="nucleotide sequence ID" value="NM_001083595.3"/>
</dbReference>
<dbReference type="SMR" id="P05001"/>
<dbReference type="STRING" id="9796.ENSECAP00000054409"/>
<dbReference type="PaxDb" id="9796-ENSECAP00000054409"/>
<dbReference type="GeneID" id="100036553"/>
<dbReference type="KEGG" id="ecb:100036553"/>
<dbReference type="CTD" id="100036553"/>
<dbReference type="InParanoid" id="P05001"/>
<dbReference type="OrthoDB" id="9833506at2759"/>
<dbReference type="Proteomes" id="UP000002281">
    <property type="component" value="Unplaced"/>
</dbReference>
<dbReference type="GO" id="GO:0005615">
    <property type="term" value="C:extracellular space"/>
    <property type="evidence" value="ECO:0000318"/>
    <property type="project" value="GO_Central"/>
</dbReference>
<dbReference type="GO" id="GO:0005125">
    <property type="term" value="F:cytokine activity"/>
    <property type="evidence" value="ECO:0000318"/>
    <property type="project" value="GO_Central"/>
</dbReference>
<dbReference type="GO" id="GO:0005132">
    <property type="term" value="F:type I interferon receptor binding"/>
    <property type="evidence" value="ECO:0000318"/>
    <property type="project" value="GO_Central"/>
</dbReference>
<dbReference type="GO" id="GO:0002250">
    <property type="term" value="P:adaptive immune response"/>
    <property type="evidence" value="ECO:0000318"/>
    <property type="project" value="GO_Central"/>
</dbReference>
<dbReference type="GO" id="GO:0002312">
    <property type="term" value="P:B cell activation involved in immune response"/>
    <property type="evidence" value="ECO:0000318"/>
    <property type="project" value="GO_Central"/>
</dbReference>
<dbReference type="GO" id="GO:0051607">
    <property type="term" value="P:defense response to virus"/>
    <property type="evidence" value="ECO:0007669"/>
    <property type="project" value="UniProtKB-KW"/>
</dbReference>
<dbReference type="GO" id="GO:0006959">
    <property type="term" value="P:humoral immune response"/>
    <property type="evidence" value="ECO:0000318"/>
    <property type="project" value="GO_Central"/>
</dbReference>
<dbReference type="GO" id="GO:0002323">
    <property type="term" value="P:natural killer cell activation involved in immune response"/>
    <property type="evidence" value="ECO:0000318"/>
    <property type="project" value="GO_Central"/>
</dbReference>
<dbReference type="GO" id="GO:0043330">
    <property type="term" value="P:response to exogenous dsRNA"/>
    <property type="evidence" value="ECO:0000318"/>
    <property type="project" value="GO_Central"/>
</dbReference>
<dbReference type="GO" id="GO:0002286">
    <property type="term" value="P:T cell activation involved in immune response"/>
    <property type="evidence" value="ECO:0000318"/>
    <property type="project" value="GO_Central"/>
</dbReference>
<dbReference type="GO" id="GO:0060337">
    <property type="term" value="P:type I interferon-mediated signaling pathway"/>
    <property type="evidence" value="ECO:0000318"/>
    <property type="project" value="GO_Central"/>
</dbReference>
<dbReference type="CDD" id="cd00095">
    <property type="entry name" value="IFab"/>
    <property type="match status" value="1"/>
</dbReference>
<dbReference type="FunFam" id="1.20.1250.10:FF:000001">
    <property type="entry name" value="Interferon alpha"/>
    <property type="match status" value="1"/>
</dbReference>
<dbReference type="Gene3D" id="1.20.1250.10">
    <property type="match status" value="1"/>
</dbReference>
<dbReference type="InterPro" id="IPR009079">
    <property type="entry name" value="4_helix_cytokine-like_core"/>
</dbReference>
<dbReference type="InterPro" id="IPR000471">
    <property type="entry name" value="Interferon_alpha/beta/delta"/>
</dbReference>
<dbReference type="PANTHER" id="PTHR11691:SF37">
    <property type="entry name" value="INTERFERON OMEGA-1"/>
    <property type="match status" value="1"/>
</dbReference>
<dbReference type="PANTHER" id="PTHR11691">
    <property type="entry name" value="TYPE I INTERFERON"/>
    <property type="match status" value="1"/>
</dbReference>
<dbReference type="Pfam" id="PF00143">
    <property type="entry name" value="Interferon"/>
    <property type="match status" value="1"/>
</dbReference>
<dbReference type="PRINTS" id="PR00266">
    <property type="entry name" value="INTERFERONAB"/>
</dbReference>
<dbReference type="SMART" id="SM00076">
    <property type="entry name" value="IFabd"/>
    <property type="match status" value="1"/>
</dbReference>
<dbReference type="SUPFAM" id="SSF47266">
    <property type="entry name" value="4-helical cytokines"/>
    <property type="match status" value="1"/>
</dbReference>
<dbReference type="PROSITE" id="PS00252">
    <property type="entry name" value="INTERFERON_A_B_D"/>
    <property type="match status" value="1"/>
</dbReference>
<protein>
    <recommendedName>
        <fullName>Interferon omega-1</fullName>
    </recommendedName>
    <alternativeName>
        <fullName>Interferon alpha-II-1</fullName>
    </alternativeName>
</protein>
<name>IFNW1_HORSE</name>
<comment type="subcellular location">
    <subcellularLocation>
        <location>Secreted</location>
    </subcellularLocation>
</comment>
<comment type="similarity">
    <text evidence="3">Belongs to the alpha/beta interferon family.</text>
</comment>
<accession>P05001</accession>
<evidence type="ECO:0000250" key="1"/>
<evidence type="ECO:0000255" key="2"/>
<evidence type="ECO:0000305" key="3"/>
<keyword id="KW-0051">Antiviral defense</keyword>
<keyword id="KW-0202">Cytokine</keyword>
<keyword id="KW-1015">Disulfide bond</keyword>
<keyword id="KW-0325">Glycoprotein</keyword>
<keyword id="KW-1185">Reference proteome</keyword>
<keyword id="KW-0964">Secreted</keyword>
<keyword id="KW-0732">Signal</keyword>
<reference key="1">
    <citation type="journal article" date="1986" name="DNA">
        <title>Molecular cloning and expression in Escherichia coli of equine type I interferons.</title>
        <authorList>
            <person name="Himmler A."/>
            <person name="Hauptmann R."/>
            <person name="Adolf G.R."/>
            <person name="Swetly P."/>
        </authorList>
    </citation>
    <scope>NUCLEOTIDE SEQUENCE [GENOMIC DNA]</scope>
</reference>
<sequence length="195" mass="21882">MAFSVSSLMALVVISSSPVSSMSCDLPASLDLRKQETLRVLHQMETISPPSCLKHRTDFRFPQEQLDGRQFPEAQATSVLQEMLQQIVSLFHTERSSAAWNTTLLDRLLAGLHQQLEDLNTCLDEQTGEEESALGTVGPTLAVKRYFRRIRLYLTEKKYSDCAWEIVRVDIMRSFSSSANLQGRLGMKDGDLGSP</sequence>
<organism>
    <name type="scientific">Equus caballus</name>
    <name type="common">Horse</name>
    <dbReference type="NCBI Taxonomy" id="9796"/>
    <lineage>
        <taxon>Eukaryota</taxon>
        <taxon>Metazoa</taxon>
        <taxon>Chordata</taxon>
        <taxon>Craniata</taxon>
        <taxon>Vertebrata</taxon>
        <taxon>Euteleostomi</taxon>
        <taxon>Mammalia</taxon>
        <taxon>Eutheria</taxon>
        <taxon>Laurasiatheria</taxon>
        <taxon>Perissodactyla</taxon>
        <taxon>Equidae</taxon>
        <taxon>Equus</taxon>
    </lineage>
</organism>